<organism>
    <name type="scientific">Anopheles gambiae</name>
    <name type="common">African malaria mosquito</name>
    <dbReference type="NCBI Taxonomy" id="7165"/>
    <lineage>
        <taxon>Eukaryota</taxon>
        <taxon>Metazoa</taxon>
        <taxon>Ecdysozoa</taxon>
        <taxon>Arthropoda</taxon>
        <taxon>Hexapoda</taxon>
        <taxon>Insecta</taxon>
        <taxon>Pterygota</taxon>
        <taxon>Neoptera</taxon>
        <taxon>Endopterygota</taxon>
        <taxon>Diptera</taxon>
        <taxon>Nematocera</taxon>
        <taxon>Culicoidea</taxon>
        <taxon>Culicidae</taxon>
        <taxon>Anophelinae</taxon>
        <taxon>Anopheles</taxon>
    </lineage>
</organism>
<keyword id="KW-0965">Cell junction</keyword>
<keyword id="KW-1003">Cell membrane</keyword>
<keyword id="KW-0217">Developmental protein</keyword>
<keyword id="KW-0342">GTP-binding</keyword>
<keyword id="KW-0449">Lipoprotein</keyword>
<keyword id="KW-0472">Membrane</keyword>
<keyword id="KW-0488">Methylation</keyword>
<keyword id="KW-0547">Nucleotide-binding</keyword>
<keyword id="KW-0636">Prenylation</keyword>
<keyword id="KW-1185">Reference proteome</keyword>
<dbReference type="EMBL" id="AAAB01008859">
    <property type="protein sequence ID" value="EAA08093.4"/>
    <property type="molecule type" value="Genomic_DNA"/>
</dbReference>
<dbReference type="EMBL" id="Z69980">
    <property type="protein sequence ID" value="CAA93820.1"/>
    <property type="molecule type" value="mRNA"/>
</dbReference>
<dbReference type="RefSeq" id="XP_003436127.1">
    <property type="nucleotide sequence ID" value="XM_003436079.1"/>
</dbReference>
<dbReference type="SMR" id="Q17031"/>
<dbReference type="FunCoup" id="Q17031">
    <property type="interactions" value="2199"/>
</dbReference>
<dbReference type="STRING" id="7165.Q17031"/>
<dbReference type="PaxDb" id="7165-AGAP002440-PC"/>
<dbReference type="EnsemblMetazoa" id="AGAP002440-RA">
    <property type="protein sequence ID" value="AGAP002440-PA"/>
    <property type="gene ID" value="AGAP002440"/>
</dbReference>
<dbReference type="EnsemblMetazoa" id="AGAP002440-RB">
    <property type="protein sequence ID" value="AGAP002440-PB"/>
    <property type="gene ID" value="AGAP002440"/>
</dbReference>
<dbReference type="EnsemblMetazoa" id="AGAP002440-RC">
    <property type="protein sequence ID" value="AGAP002440-PC"/>
    <property type="gene ID" value="AGAP002440"/>
</dbReference>
<dbReference type="GeneID" id="1273521"/>
<dbReference type="KEGG" id="aga:1273521"/>
<dbReference type="CTD" id="998"/>
<dbReference type="VEuPathDB" id="VectorBase:AGAMI1_006983"/>
<dbReference type="VEuPathDB" id="VectorBase:AGAP002440"/>
<dbReference type="eggNOG" id="KOG0393">
    <property type="taxonomic scope" value="Eukaryota"/>
</dbReference>
<dbReference type="HOGENOM" id="CLU_041217_21_3_1"/>
<dbReference type="InParanoid" id="Q17031"/>
<dbReference type="OMA" id="GDEPYTF"/>
<dbReference type="PhylomeDB" id="Q17031"/>
<dbReference type="Proteomes" id="UP000007062">
    <property type="component" value="Chromosome 2R"/>
</dbReference>
<dbReference type="GO" id="GO:0005912">
    <property type="term" value="C:adherens junction"/>
    <property type="evidence" value="ECO:0007669"/>
    <property type="project" value="UniProtKB-SubCell"/>
</dbReference>
<dbReference type="GO" id="GO:0005737">
    <property type="term" value="C:cytoplasm"/>
    <property type="evidence" value="ECO:0007669"/>
    <property type="project" value="UniProtKB-ARBA"/>
</dbReference>
<dbReference type="GO" id="GO:0005886">
    <property type="term" value="C:plasma membrane"/>
    <property type="evidence" value="ECO:0000318"/>
    <property type="project" value="GO_Central"/>
</dbReference>
<dbReference type="GO" id="GO:0005525">
    <property type="term" value="F:GTP binding"/>
    <property type="evidence" value="ECO:0000318"/>
    <property type="project" value="GO_Central"/>
</dbReference>
<dbReference type="GO" id="GO:0003924">
    <property type="term" value="F:GTPase activity"/>
    <property type="evidence" value="ECO:0000318"/>
    <property type="project" value="GO_Central"/>
</dbReference>
<dbReference type="GO" id="GO:0019901">
    <property type="term" value="F:protein kinase binding"/>
    <property type="evidence" value="ECO:0000318"/>
    <property type="project" value="GO_Central"/>
</dbReference>
<dbReference type="GO" id="GO:0007015">
    <property type="term" value="P:actin filament organization"/>
    <property type="evidence" value="ECO:0000318"/>
    <property type="project" value="GO_Central"/>
</dbReference>
<dbReference type="GO" id="GO:0001667">
    <property type="term" value="P:ameboidal-type cell migration"/>
    <property type="evidence" value="ECO:0007669"/>
    <property type="project" value="UniProtKB-ARBA"/>
</dbReference>
<dbReference type="GO" id="GO:0009653">
    <property type="term" value="P:anatomical structure morphogenesis"/>
    <property type="evidence" value="ECO:0007669"/>
    <property type="project" value="UniProtKB-ARBA"/>
</dbReference>
<dbReference type="GO" id="GO:0022412">
    <property type="term" value="P:cellular process involved in reproduction in multicellular organism"/>
    <property type="evidence" value="ECO:0007669"/>
    <property type="project" value="UniProtKB-ARBA"/>
</dbReference>
<dbReference type="GO" id="GO:0003006">
    <property type="term" value="P:developmental process involved in reproduction"/>
    <property type="evidence" value="ECO:0007669"/>
    <property type="project" value="UniProtKB-ARBA"/>
</dbReference>
<dbReference type="GO" id="GO:0006897">
    <property type="term" value="P:endocytosis"/>
    <property type="evidence" value="ECO:0000318"/>
    <property type="project" value="GO_Central"/>
</dbReference>
<dbReference type="GO" id="GO:0030010">
    <property type="term" value="P:establishment of cell polarity"/>
    <property type="evidence" value="ECO:0000318"/>
    <property type="project" value="GO_Central"/>
</dbReference>
<dbReference type="GO" id="GO:0035099">
    <property type="term" value="P:hemocyte migration"/>
    <property type="evidence" value="ECO:0007669"/>
    <property type="project" value="UniProtKB-ARBA"/>
</dbReference>
<dbReference type="GO" id="GO:0035006">
    <property type="term" value="P:melanization defense response"/>
    <property type="evidence" value="ECO:0007669"/>
    <property type="project" value="UniProtKB-ARBA"/>
</dbReference>
<dbReference type="GO" id="GO:0051130">
    <property type="term" value="P:positive regulation of cellular component organization"/>
    <property type="evidence" value="ECO:0007669"/>
    <property type="project" value="UniProtKB-ARBA"/>
</dbReference>
<dbReference type="GO" id="GO:0007165">
    <property type="term" value="P:signal transduction"/>
    <property type="evidence" value="ECO:0000318"/>
    <property type="project" value="GO_Central"/>
</dbReference>
<dbReference type="GO" id="GO:0007264">
    <property type="term" value="P:small GTPase-mediated signal transduction"/>
    <property type="evidence" value="ECO:0007669"/>
    <property type="project" value="InterPro"/>
</dbReference>
<dbReference type="CDD" id="cd01874">
    <property type="entry name" value="Cdc42"/>
    <property type="match status" value="1"/>
</dbReference>
<dbReference type="FunFam" id="3.40.50.300:FF:000167">
    <property type="entry name" value="Cell division control protein 42 homolog"/>
    <property type="match status" value="1"/>
</dbReference>
<dbReference type="Gene3D" id="3.40.50.300">
    <property type="entry name" value="P-loop containing nucleotide triphosphate hydrolases"/>
    <property type="match status" value="1"/>
</dbReference>
<dbReference type="InterPro" id="IPR037874">
    <property type="entry name" value="Cdc42"/>
</dbReference>
<dbReference type="InterPro" id="IPR027417">
    <property type="entry name" value="P-loop_NTPase"/>
</dbReference>
<dbReference type="InterPro" id="IPR005225">
    <property type="entry name" value="Small_GTP-bd"/>
</dbReference>
<dbReference type="InterPro" id="IPR001806">
    <property type="entry name" value="Small_GTPase"/>
</dbReference>
<dbReference type="InterPro" id="IPR003578">
    <property type="entry name" value="Small_GTPase_Rho"/>
</dbReference>
<dbReference type="NCBIfam" id="TIGR00231">
    <property type="entry name" value="small_GTP"/>
    <property type="match status" value="1"/>
</dbReference>
<dbReference type="PANTHER" id="PTHR24072">
    <property type="entry name" value="RHO FAMILY GTPASE"/>
    <property type="match status" value="1"/>
</dbReference>
<dbReference type="Pfam" id="PF00071">
    <property type="entry name" value="Ras"/>
    <property type="match status" value="1"/>
</dbReference>
<dbReference type="PRINTS" id="PR00449">
    <property type="entry name" value="RASTRNSFRMNG"/>
</dbReference>
<dbReference type="SMART" id="SM00175">
    <property type="entry name" value="RAB"/>
    <property type="match status" value="1"/>
</dbReference>
<dbReference type="SMART" id="SM00173">
    <property type="entry name" value="RAS"/>
    <property type="match status" value="1"/>
</dbReference>
<dbReference type="SMART" id="SM00174">
    <property type="entry name" value="RHO"/>
    <property type="match status" value="1"/>
</dbReference>
<dbReference type="SUPFAM" id="SSF52540">
    <property type="entry name" value="P-loop containing nucleoside triphosphate hydrolases"/>
    <property type="match status" value="1"/>
</dbReference>
<dbReference type="PROSITE" id="PS51420">
    <property type="entry name" value="RHO"/>
    <property type="match status" value="1"/>
</dbReference>
<protein>
    <recommendedName>
        <fullName>Cdc42 homolog</fullName>
    </recommendedName>
    <alternativeName>
        <fullName>25 kDa GTP-binding protein</fullName>
    </alternativeName>
</protein>
<proteinExistence type="evidence at transcript level"/>
<comment type="function">
    <text evidence="1">Regulates mbt kinase activity and is also required to recruit mbt to adherens junctions. Together with mbt, regulates photoreceptor cell morphogenesis (By similarity).</text>
</comment>
<comment type="subcellular location">
    <subcellularLocation>
        <location evidence="1">Cell junction</location>
        <location evidence="1">Adherens junction</location>
    </subcellularLocation>
    <subcellularLocation>
        <location evidence="1">Cell membrane</location>
        <topology evidence="1">Lipid-anchor</topology>
    </subcellularLocation>
</comment>
<comment type="tissue specificity">
    <text evidence="3">Highly expressed in the adult unfed gut, expression drops after feeding.</text>
</comment>
<comment type="developmental stage">
    <text evidence="3">Expressed throughout development with highest levels in early embryo and pupae and lowest levels in late pupae and adults.</text>
</comment>
<comment type="similarity">
    <text evidence="4">Belongs to the small GTPase superfamily. Rho family. CDC42 subfamily.</text>
</comment>
<gene>
    <name type="primary">Cdc42</name>
    <name type="ORF">AGAP002440</name>
</gene>
<feature type="chain" id="PRO_0000198957" description="Cdc42 homolog">
    <location>
        <begin position="1"/>
        <end position="188"/>
    </location>
</feature>
<feature type="propeptide" id="PRO_0000281287" description="Removed in mature form" evidence="1">
    <location>
        <begin position="189"/>
        <end position="191"/>
    </location>
</feature>
<feature type="short sequence motif" description="Effector region" evidence="2">
    <location>
        <begin position="32"/>
        <end position="40"/>
    </location>
</feature>
<feature type="binding site" evidence="1">
    <location>
        <begin position="10"/>
        <end position="17"/>
    </location>
    <ligand>
        <name>GTP</name>
        <dbReference type="ChEBI" id="CHEBI:37565"/>
    </ligand>
</feature>
<feature type="binding site" evidence="1">
    <location>
        <begin position="57"/>
        <end position="61"/>
    </location>
    <ligand>
        <name>GTP</name>
        <dbReference type="ChEBI" id="CHEBI:37565"/>
    </ligand>
</feature>
<feature type="binding site" evidence="1">
    <location>
        <begin position="115"/>
        <end position="118"/>
    </location>
    <ligand>
        <name>GTP</name>
        <dbReference type="ChEBI" id="CHEBI:37565"/>
    </ligand>
</feature>
<feature type="modified residue" description="Cysteine methyl ester" evidence="1">
    <location>
        <position position="188"/>
    </location>
</feature>
<feature type="lipid moiety-binding region" description="S-geranylgeranyl cysteine" evidence="1">
    <location>
        <position position="188"/>
    </location>
</feature>
<feature type="sequence conflict" description="In Ref. 2; CAA93820." evidence="4" ref="2">
    <original>T</original>
    <variation>S</variation>
    <location>
        <position position="58"/>
    </location>
</feature>
<feature type="sequence conflict" description="In Ref. 2; CAA93820." evidence="4" ref="2">
    <original>E</original>
    <variation>V</variation>
    <location>
        <position position="171"/>
    </location>
</feature>
<reference key="1">
    <citation type="journal article" date="2002" name="Science">
        <title>The genome sequence of the malaria mosquito Anopheles gambiae.</title>
        <authorList>
            <person name="Holt R.A."/>
            <person name="Subramanian G.M."/>
            <person name="Halpern A."/>
            <person name="Sutton G.G."/>
            <person name="Charlab R."/>
            <person name="Nusskern D.R."/>
            <person name="Wincker P."/>
            <person name="Clark A.G."/>
            <person name="Ribeiro J.M.C."/>
            <person name="Wides R."/>
            <person name="Salzberg S.L."/>
            <person name="Loftus B.J."/>
            <person name="Yandell M.D."/>
            <person name="Majoros W.H."/>
            <person name="Rusch D.B."/>
            <person name="Lai Z."/>
            <person name="Kraft C.L."/>
            <person name="Abril J.F."/>
            <person name="Anthouard V."/>
            <person name="Arensburger P."/>
            <person name="Atkinson P.W."/>
            <person name="Baden H."/>
            <person name="de Berardinis V."/>
            <person name="Baldwin D."/>
            <person name="Benes V."/>
            <person name="Biedler J."/>
            <person name="Blass C."/>
            <person name="Bolanos R."/>
            <person name="Boscus D."/>
            <person name="Barnstead M."/>
            <person name="Cai S."/>
            <person name="Center A."/>
            <person name="Chaturverdi K."/>
            <person name="Christophides G.K."/>
            <person name="Chrystal M.A.M."/>
            <person name="Clamp M."/>
            <person name="Cravchik A."/>
            <person name="Curwen V."/>
            <person name="Dana A."/>
            <person name="Delcher A."/>
            <person name="Dew I."/>
            <person name="Evans C.A."/>
            <person name="Flanigan M."/>
            <person name="Grundschober-Freimoser A."/>
            <person name="Friedli L."/>
            <person name="Gu Z."/>
            <person name="Guan P."/>
            <person name="Guigo R."/>
            <person name="Hillenmeyer M.E."/>
            <person name="Hladun S.L."/>
            <person name="Hogan J.R."/>
            <person name="Hong Y.S."/>
            <person name="Hoover J."/>
            <person name="Jaillon O."/>
            <person name="Ke Z."/>
            <person name="Kodira C.D."/>
            <person name="Kokoza E."/>
            <person name="Koutsos A."/>
            <person name="Letunic I."/>
            <person name="Levitsky A.A."/>
            <person name="Liang Y."/>
            <person name="Lin J.-J."/>
            <person name="Lobo N.F."/>
            <person name="Lopez J.R."/>
            <person name="Malek J.A."/>
            <person name="McIntosh T.C."/>
            <person name="Meister S."/>
            <person name="Miller J.R."/>
            <person name="Mobarry C."/>
            <person name="Mongin E."/>
            <person name="Murphy S.D."/>
            <person name="O'Brochta D.A."/>
            <person name="Pfannkoch C."/>
            <person name="Qi R."/>
            <person name="Regier M.A."/>
            <person name="Remington K."/>
            <person name="Shao H."/>
            <person name="Sharakhova M.V."/>
            <person name="Sitter C.D."/>
            <person name="Shetty J."/>
            <person name="Smith T.J."/>
            <person name="Strong R."/>
            <person name="Sun J."/>
            <person name="Thomasova D."/>
            <person name="Ton L.Q."/>
            <person name="Topalis P."/>
            <person name="Tu Z.J."/>
            <person name="Unger M.F."/>
            <person name="Walenz B."/>
            <person name="Wang A.H."/>
            <person name="Wang J."/>
            <person name="Wang M."/>
            <person name="Wang X."/>
            <person name="Woodford K.J."/>
            <person name="Wortman J.R."/>
            <person name="Wu M."/>
            <person name="Yao A."/>
            <person name="Zdobnov E.M."/>
            <person name="Zhang H."/>
            <person name="Zhao Q."/>
            <person name="Zhao S."/>
            <person name="Zhu S.C."/>
            <person name="Zhimulev I."/>
            <person name="Coluzzi M."/>
            <person name="della Torre A."/>
            <person name="Roth C.W."/>
            <person name="Louis C."/>
            <person name="Kalush F."/>
            <person name="Mural R.J."/>
            <person name="Myers E.W."/>
            <person name="Adams M.D."/>
            <person name="Smith H.O."/>
            <person name="Broder S."/>
            <person name="Gardner M.J."/>
            <person name="Fraser C.M."/>
            <person name="Birney E."/>
            <person name="Bork P."/>
            <person name="Brey P.T."/>
            <person name="Venter J.C."/>
            <person name="Weissenbach J."/>
            <person name="Kafatos F.C."/>
            <person name="Collins F.H."/>
            <person name="Hoffman S.L."/>
        </authorList>
    </citation>
    <scope>NUCLEOTIDE SEQUENCE [LARGE SCALE GENOMIC DNA]</scope>
    <source>
        <strain>PEST</strain>
    </source>
</reference>
<reference key="2">
    <citation type="journal article" date="1996" name="Proc. Natl. Acad. Sci. U.S.A.">
        <title>Identification and characterization of differentially expressed cDNAs of the vector mosquito, Anopheles gambiae.</title>
        <authorList>
            <person name="Dimopoulos G.M."/>
            <person name="Richman A.M."/>
            <person name="della Torre A."/>
            <person name="Kafatos F.C."/>
            <person name="Louis C."/>
        </authorList>
    </citation>
    <scope>NUCLEOTIDE SEQUENCE [MRNA] OF 58-191</scope>
    <scope>TISSUE SPECIFICITY</scope>
    <scope>DEVELOPMENTAL STAGE</scope>
    <source>
        <strain>G3</strain>
        <tissue>Midgut</tissue>
    </source>
</reference>
<accession>Q17031</accession>
<accession>Q7PQZ1</accession>
<accession>Q93110</accession>
<sequence length="191" mass="21413">MQTIKCVVVGDGAVGKTCLLISYTTNKFPSEYVPTVFDNYAVTVMIGGEPYTLGLFDTAGQEDYDRLRPLSYPQTDVFLVCFSVVSPSSFENVKEKWVPEITHHCQKTPFLLVGTQIDLRDENSTLEKLAKNKQKPITLEQGEKLAKELKAVKYVECSALTQKGLKNVFDEAILAALEPPEPTKKRKCRFL</sequence>
<name>CDC42_ANOGA</name>
<evidence type="ECO:0000250" key="1"/>
<evidence type="ECO:0000255" key="2"/>
<evidence type="ECO:0000269" key="3">
    <source>
    </source>
</evidence>
<evidence type="ECO:0000305" key="4"/>